<dbReference type="EC" id="3.11.1.1" evidence="1"/>
<dbReference type="EMBL" id="AM167904">
    <property type="protein sequence ID" value="CAJ48800.1"/>
    <property type="molecule type" value="Genomic_DNA"/>
</dbReference>
<dbReference type="RefSeq" id="WP_012416874.1">
    <property type="nucleotide sequence ID" value="NC_010645.1"/>
</dbReference>
<dbReference type="SMR" id="Q2L1W2"/>
<dbReference type="STRING" id="360910.BAV1192"/>
<dbReference type="GeneID" id="92935616"/>
<dbReference type="KEGG" id="bav:BAV1192"/>
<dbReference type="eggNOG" id="COG0637">
    <property type="taxonomic scope" value="Bacteria"/>
</dbReference>
<dbReference type="HOGENOM" id="CLU_045011_12_0_4"/>
<dbReference type="OrthoDB" id="5504491at2"/>
<dbReference type="Proteomes" id="UP000001977">
    <property type="component" value="Chromosome"/>
</dbReference>
<dbReference type="GO" id="GO:0005829">
    <property type="term" value="C:cytosol"/>
    <property type="evidence" value="ECO:0007669"/>
    <property type="project" value="TreeGrafter"/>
</dbReference>
<dbReference type="GO" id="GO:0000287">
    <property type="term" value="F:magnesium ion binding"/>
    <property type="evidence" value="ECO:0007669"/>
    <property type="project" value="UniProtKB-UniRule"/>
</dbReference>
<dbReference type="GO" id="GO:0008967">
    <property type="term" value="F:phosphoglycolate phosphatase activity"/>
    <property type="evidence" value="ECO:0007669"/>
    <property type="project" value="TreeGrafter"/>
</dbReference>
<dbReference type="GO" id="GO:0050194">
    <property type="term" value="F:phosphonoacetaldehyde hydrolase activity"/>
    <property type="evidence" value="ECO:0007669"/>
    <property type="project" value="UniProtKB-UniRule"/>
</dbReference>
<dbReference type="GO" id="GO:0006281">
    <property type="term" value="P:DNA repair"/>
    <property type="evidence" value="ECO:0007669"/>
    <property type="project" value="TreeGrafter"/>
</dbReference>
<dbReference type="GO" id="GO:0019700">
    <property type="term" value="P:organic phosphonate catabolic process"/>
    <property type="evidence" value="ECO:0007669"/>
    <property type="project" value="InterPro"/>
</dbReference>
<dbReference type="FunFam" id="1.10.150.240:FF:000006">
    <property type="entry name" value="Phosphonoacetaldehyde hydrolase"/>
    <property type="match status" value="1"/>
</dbReference>
<dbReference type="Gene3D" id="3.40.50.1000">
    <property type="entry name" value="HAD superfamily/HAD-like"/>
    <property type="match status" value="1"/>
</dbReference>
<dbReference type="Gene3D" id="1.10.150.240">
    <property type="entry name" value="Putative phosphatase, domain 2"/>
    <property type="match status" value="1"/>
</dbReference>
<dbReference type="HAMAP" id="MF_01375">
    <property type="entry name" value="PhnX"/>
    <property type="match status" value="1"/>
</dbReference>
<dbReference type="InterPro" id="IPR050155">
    <property type="entry name" value="HAD-like_hydrolase_sf"/>
</dbReference>
<dbReference type="InterPro" id="IPR036412">
    <property type="entry name" value="HAD-like_sf"/>
</dbReference>
<dbReference type="InterPro" id="IPR006439">
    <property type="entry name" value="HAD-SF_hydro_IA"/>
</dbReference>
<dbReference type="InterPro" id="IPR023214">
    <property type="entry name" value="HAD_sf"/>
</dbReference>
<dbReference type="InterPro" id="IPR023198">
    <property type="entry name" value="PGP-like_dom2"/>
</dbReference>
<dbReference type="InterPro" id="IPR006323">
    <property type="entry name" value="Phosphonoacetald_hydro"/>
</dbReference>
<dbReference type="NCBIfam" id="TIGR01509">
    <property type="entry name" value="HAD-SF-IA-v3"/>
    <property type="match status" value="1"/>
</dbReference>
<dbReference type="NCBIfam" id="TIGR01422">
    <property type="entry name" value="phosphonatase"/>
    <property type="match status" value="1"/>
</dbReference>
<dbReference type="PANTHER" id="PTHR43434">
    <property type="entry name" value="PHOSPHOGLYCOLATE PHOSPHATASE"/>
    <property type="match status" value="1"/>
</dbReference>
<dbReference type="PANTHER" id="PTHR43434:SF19">
    <property type="entry name" value="PHOSPHONOACETALDEHYDE HYDROLASE"/>
    <property type="match status" value="1"/>
</dbReference>
<dbReference type="Pfam" id="PF00702">
    <property type="entry name" value="Hydrolase"/>
    <property type="match status" value="1"/>
</dbReference>
<dbReference type="SFLD" id="SFLDG01135">
    <property type="entry name" value="C1.5.6:_HAD__Beta-PGM__Phospha"/>
    <property type="match status" value="1"/>
</dbReference>
<dbReference type="SFLD" id="SFLDS00003">
    <property type="entry name" value="Haloacid_Dehalogenase"/>
    <property type="match status" value="1"/>
</dbReference>
<dbReference type="SUPFAM" id="SSF56784">
    <property type="entry name" value="HAD-like"/>
    <property type="match status" value="1"/>
</dbReference>
<sequence length="280" mass="30081">MPFFFSGYAMNALPVRLEAVIFDWAGTLVDFGSFAPTRVFVEAFAQFGVALTLEQARGPMGMGKWDHIRALCDDPGIASQYQERFGALPDDAAVTAIYERFLPMQLEKVAEYSDVIPGALQTLREIRERGLKVGSCSGYPASVMRRVLERALAGGLEIATVVASDQVPRARPAPAMALKNAVELGVADVAACVKVDDTGVGIEEGRRAGMWSVGLLLSGNAAGLTRDAYQALDEVGREAARARARQAFASAEPHYFIDTIADLPSVLSDIEARLASAERP</sequence>
<comment type="function">
    <text evidence="1">Involved in phosphonate degradation.</text>
</comment>
<comment type="catalytic activity">
    <reaction evidence="1">
        <text>phosphonoacetaldehyde + H2O = acetaldehyde + phosphate + H(+)</text>
        <dbReference type="Rhea" id="RHEA:18905"/>
        <dbReference type="ChEBI" id="CHEBI:15343"/>
        <dbReference type="ChEBI" id="CHEBI:15377"/>
        <dbReference type="ChEBI" id="CHEBI:15378"/>
        <dbReference type="ChEBI" id="CHEBI:43474"/>
        <dbReference type="ChEBI" id="CHEBI:58383"/>
        <dbReference type="EC" id="3.11.1.1"/>
    </reaction>
</comment>
<comment type="cofactor">
    <cofactor evidence="1">
        <name>Mg(2+)</name>
        <dbReference type="ChEBI" id="CHEBI:18420"/>
    </cofactor>
    <text evidence="1">Binds 1 Mg(2+) ion per subunit.</text>
</comment>
<comment type="subunit">
    <text evidence="1">Homodimer.</text>
</comment>
<comment type="similarity">
    <text evidence="1">Belongs to the HAD-like hydrolase superfamily. PhnX family.</text>
</comment>
<comment type="caution">
    <text evidence="2">The first enzyme involved in phosphonate degradation (PhnW, EC 2.6.1.37) is not found in this organism. The function of this enzyme is therefore uncertain.</text>
</comment>
<name>PHNX_BORA1</name>
<organism>
    <name type="scientific">Bordetella avium (strain 197N)</name>
    <dbReference type="NCBI Taxonomy" id="360910"/>
    <lineage>
        <taxon>Bacteria</taxon>
        <taxon>Pseudomonadati</taxon>
        <taxon>Pseudomonadota</taxon>
        <taxon>Betaproteobacteria</taxon>
        <taxon>Burkholderiales</taxon>
        <taxon>Alcaligenaceae</taxon>
        <taxon>Bordetella</taxon>
    </lineage>
</organism>
<accession>Q2L1W2</accession>
<reference key="1">
    <citation type="journal article" date="2006" name="J. Bacteriol.">
        <title>Comparison of the genome sequence of the poultry pathogen Bordetella avium with those of B. bronchiseptica, B. pertussis, and B. parapertussis reveals extensive diversity in surface structures associated with host interaction.</title>
        <authorList>
            <person name="Sebaihia M."/>
            <person name="Preston A."/>
            <person name="Maskell D.J."/>
            <person name="Kuzmiak H."/>
            <person name="Connell T.D."/>
            <person name="King N.D."/>
            <person name="Orndorff P.E."/>
            <person name="Miyamoto D.M."/>
            <person name="Thomson N.R."/>
            <person name="Harris D."/>
            <person name="Goble A."/>
            <person name="Lord A."/>
            <person name="Murphy L."/>
            <person name="Quail M.A."/>
            <person name="Rutter S."/>
            <person name="Squares R."/>
            <person name="Squares S."/>
            <person name="Woodward J."/>
            <person name="Parkhill J."/>
            <person name="Temple L.M."/>
        </authorList>
    </citation>
    <scope>NUCLEOTIDE SEQUENCE [LARGE SCALE GENOMIC DNA]</scope>
    <source>
        <strain>197N</strain>
    </source>
</reference>
<feature type="chain" id="PRO_0000284583" description="Phosphonoacetaldehyde hydrolase">
    <location>
        <begin position="1"/>
        <end position="280"/>
    </location>
</feature>
<feature type="active site" description="Nucleophile" evidence="1">
    <location>
        <position position="23"/>
    </location>
</feature>
<feature type="active site" description="Schiff-base intermediate with substrate" evidence="1">
    <location>
        <position position="64"/>
    </location>
</feature>
<feature type="binding site" evidence="1">
    <location>
        <position position="23"/>
    </location>
    <ligand>
        <name>Mg(2+)</name>
        <dbReference type="ChEBI" id="CHEBI:18420"/>
    </ligand>
</feature>
<feature type="binding site" evidence="1">
    <location>
        <position position="25"/>
    </location>
    <ligand>
        <name>Mg(2+)</name>
        <dbReference type="ChEBI" id="CHEBI:18420"/>
    </ligand>
</feature>
<feature type="binding site" evidence="1">
    <location>
        <position position="197"/>
    </location>
    <ligand>
        <name>Mg(2+)</name>
        <dbReference type="ChEBI" id="CHEBI:18420"/>
    </ligand>
</feature>
<keyword id="KW-0378">Hydrolase</keyword>
<keyword id="KW-0460">Magnesium</keyword>
<keyword id="KW-0479">Metal-binding</keyword>
<keyword id="KW-1185">Reference proteome</keyword>
<keyword id="KW-0704">Schiff base</keyword>
<proteinExistence type="inferred from homology"/>
<protein>
    <recommendedName>
        <fullName evidence="1">Phosphonoacetaldehyde hydrolase</fullName>
        <shortName evidence="1">Phosphonatase</shortName>
        <ecNumber evidence="1">3.11.1.1</ecNumber>
    </recommendedName>
    <alternativeName>
        <fullName evidence="1">Phosphonoacetaldehyde phosphonohydrolase</fullName>
    </alternativeName>
</protein>
<evidence type="ECO:0000255" key="1">
    <source>
        <dbReference type="HAMAP-Rule" id="MF_01375"/>
    </source>
</evidence>
<evidence type="ECO:0000305" key="2"/>
<gene>
    <name evidence="1" type="primary">phnX</name>
    <name type="ordered locus">BAV1192</name>
</gene>